<evidence type="ECO:0000255" key="1">
    <source>
        <dbReference type="HAMAP-Rule" id="MF_00144"/>
    </source>
</evidence>
<organism>
    <name type="scientific">Caldanaerobacter subterraneus subsp. tengcongensis (strain DSM 15242 / JCM 11007 / NBRC 100824 / MB4)</name>
    <name type="common">Thermoanaerobacter tengcongensis</name>
    <dbReference type="NCBI Taxonomy" id="273068"/>
    <lineage>
        <taxon>Bacteria</taxon>
        <taxon>Bacillati</taxon>
        <taxon>Bacillota</taxon>
        <taxon>Clostridia</taxon>
        <taxon>Thermoanaerobacterales</taxon>
        <taxon>Thermoanaerobacteraceae</taxon>
        <taxon>Caldanaerobacter</taxon>
    </lineage>
</organism>
<keyword id="KW-0067">ATP-binding</keyword>
<keyword id="KW-0963">Cytoplasm</keyword>
<keyword id="KW-1015">Disulfide bond</keyword>
<keyword id="KW-0547">Nucleotide-binding</keyword>
<keyword id="KW-1185">Reference proteome</keyword>
<keyword id="KW-0694">RNA-binding</keyword>
<keyword id="KW-0808">Transferase</keyword>
<keyword id="KW-0819">tRNA processing</keyword>
<keyword id="KW-0820">tRNA-binding</keyword>
<name>MNMA2_CALS4</name>
<dbReference type="EC" id="2.8.1.13" evidence="1"/>
<dbReference type="EMBL" id="AE008691">
    <property type="protein sequence ID" value="AAM25594.1"/>
    <property type="molecule type" value="Genomic_DNA"/>
</dbReference>
<dbReference type="RefSeq" id="WP_011026485.1">
    <property type="nucleotide sequence ID" value="NC_003869.1"/>
</dbReference>
<dbReference type="SMR" id="Q8R7F0"/>
<dbReference type="STRING" id="273068.TTE2464"/>
<dbReference type="KEGG" id="tte:TTE2464"/>
<dbReference type="eggNOG" id="COG0482">
    <property type="taxonomic scope" value="Bacteria"/>
</dbReference>
<dbReference type="HOGENOM" id="CLU_035188_0_0_9"/>
<dbReference type="OrthoDB" id="9800696at2"/>
<dbReference type="Proteomes" id="UP000000555">
    <property type="component" value="Chromosome"/>
</dbReference>
<dbReference type="GO" id="GO:0005737">
    <property type="term" value="C:cytoplasm"/>
    <property type="evidence" value="ECO:0007669"/>
    <property type="project" value="UniProtKB-SubCell"/>
</dbReference>
<dbReference type="GO" id="GO:0005524">
    <property type="term" value="F:ATP binding"/>
    <property type="evidence" value="ECO:0007669"/>
    <property type="project" value="UniProtKB-KW"/>
</dbReference>
<dbReference type="GO" id="GO:0000049">
    <property type="term" value="F:tRNA binding"/>
    <property type="evidence" value="ECO:0007669"/>
    <property type="project" value="UniProtKB-KW"/>
</dbReference>
<dbReference type="GO" id="GO:0103016">
    <property type="term" value="F:tRNA-uridine 2-sulfurtransferase activity"/>
    <property type="evidence" value="ECO:0007669"/>
    <property type="project" value="UniProtKB-EC"/>
</dbReference>
<dbReference type="GO" id="GO:0002143">
    <property type="term" value="P:tRNA wobble position uridine thiolation"/>
    <property type="evidence" value="ECO:0007669"/>
    <property type="project" value="TreeGrafter"/>
</dbReference>
<dbReference type="CDD" id="cd01998">
    <property type="entry name" value="MnmA_TRMU-like"/>
    <property type="match status" value="1"/>
</dbReference>
<dbReference type="FunFam" id="2.30.30.280:FF:000001">
    <property type="entry name" value="tRNA-specific 2-thiouridylase MnmA"/>
    <property type="match status" value="1"/>
</dbReference>
<dbReference type="FunFam" id="2.40.30.10:FF:000023">
    <property type="entry name" value="tRNA-specific 2-thiouridylase MnmA"/>
    <property type="match status" value="1"/>
</dbReference>
<dbReference type="FunFam" id="3.40.50.620:FF:000115">
    <property type="entry name" value="tRNA-specific 2-thiouridylase MnmA"/>
    <property type="match status" value="1"/>
</dbReference>
<dbReference type="Gene3D" id="2.30.30.280">
    <property type="entry name" value="Adenine nucleotide alpha hydrolases-like domains"/>
    <property type="match status" value="1"/>
</dbReference>
<dbReference type="Gene3D" id="3.40.50.620">
    <property type="entry name" value="HUPs"/>
    <property type="match status" value="1"/>
</dbReference>
<dbReference type="Gene3D" id="2.40.30.10">
    <property type="entry name" value="Translation factors"/>
    <property type="match status" value="1"/>
</dbReference>
<dbReference type="HAMAP" id="MF_00144">
    <property type="entry name" value="tRNA_thiouridyl_MnmA"/>
    <property type="match status" value="1"/>
</dbReference>
<dbReference type="InterPro" id="IPR004506">
    <property type="entry name" value="MnmA-like"/>
</dbReference>
<dbReference type="InterPro" id="IPR046885">
    <property type="entry name" value="MnmA-like_C"/>
</dbReference>
<dbReference type="InterPro" id="IPR046884">
    <property type="entry name" value="MnmA-like_central"/>
</dbReference>
<dbReference type="InterPro" id="IPR023382">
    <property type="entry name" value="MnmA-like_central_sf"/>
</dbReference>
<dbReference type="InterPro" id="IPR001763">
    <property type="entry name" value="Rhodanese-like_dom"/>
</dbReference>
<dbReference type="InterPro" id="IPR014729">
    <property type="entry name" value="Rossmann-like_a/b/a_fold"/>
</dbReference>
<dbReference type="NCBIfam" id="NF001138">
    <property type="entry name" value="PRK00143.1"/>
    <property type="match status" value="1"/>
</dbReference>
<dbReference type="NCBIfam" id="TIGR00420">
    <property type="entry name" value="trmU"/>
    <property type="match status" value="1"/>
</dbReference>
<dbReference type="PANTHER" id="PTHR11933:SF5">
    <property type="entry name" value="MITOCHONDRIAL TRNA-SPECIFIC 2-THIOURIDYLASE 1"/>
    <property type="match status" value="1"/>
</dbReference>
<dbReference type="PANTHER" id="PTHR11933">
    <property type="entry name" value="TRNA 5-METHYLAMINOMETHYL-2-THIOURIDYLATE -METHYLTRANSFERASE"/>
    <property type="match status" value="1"/>
</dbReference>
<dbReference type="Pfam" id="PF03054">
    <property type="entry name" value="tRNA_Me_trans"/>
    <property type="match status" value="1"/>
</dbReference>
<dbReference type="Pfam" id="PF20258">
    <property type="entry name" value="tRNA_Me_trans_C"/>
    <property type="match status" value="1"/>
</dbReference>
<dbReference type="Pfam" id="PF20259">
    <property type="entry name" value="tRNA_Me_trans_M"/>
    <property type="match status" value="1"/>
</dbReference>
<dbReference type="SUPFAM" id="SSF52402">
    <property type="entry name" value="Adenine nucleotide alpha hydrolases-like"/>
    <property type="match status" value="1"/>
</dbReference>
<gene>
    <name evidence="1" type="primary">mnmA2</name>
    <name type="synonym">trmU2</name>
    <name type="ordered locus">TTE2464</name>
</gene>
<reference key="1">
    <citation type="journal article" date="2002" name="Genome Res.">
        <title>A complete sequence of the T. tengcongensis genome.</title>
        <authorList>
            <person name="Bao Q."/>
            <person name="Tian Y."/>
            <person name="Li W."/>
            <person name="Xu Z."/>
            <person name="Xuan Z."/>
            <person name="Hu S."/>
            <person name="Dong W."/>
            <person name="Yang J."/>
            <person name="Chen Y."/>
            <person name="Xue Y."/>
            <person name="Xu Y."/>
            <person name="Lai X."/>
            <person name="Huang L."/>
            <person name="Dong X."/>
            <person name="Ma Y."/>
            <person name="Ling L."/>
            <person name="Tan H."/>
            <person name="Chen R."/>
            <person name="Wang J."/>
            <person name="Yu J."/>
            <person name="Yang H."/>
        </authorList>
    </citation>
    <scope>NUCLEOTIDE SEQUENCE [LARGE SCALE GENOMIC DNA]</scope>
    <source>
        <strain>DSM 15242 / JCM 11007 / NBRC 100824 / MB4</strain>
    </source>
</reference>
<comment type="function">
    <text evidence="1">Catalyzes the 2-thiolation of uridine at the wobble position (U34) of tRNA, leading to the formation of s(2)U34.</text>
</comment>
<comment type="catalytic activity">
    <reaction evidence="1">
        <text>S-sulfanyl-L-cysteinyl-[protein] + uridine(34) in tRNA + AH2 + ATP = 2-thiouridine(34) in tRNA + L-cysteinyl-[protein] + A + AMP + diphosphate + H(+)</text>
        <dbReference type="Rhea" id="RHEA:47032"/>
        <dbReference type="Rhea" id="RHEA-COMP:10131"/>
        <dbReference type="Rhea" id="RHEA-COMP:11726"/>
        <dbReference type="Rhea" id="RHEA-COMP:11727"/>
        <dbReference type="Rhea" id="RHEA-COMP:11728"/>
        <dbReference type="ChEBI" id="CHEBI:13193"/>
        <dbReference type="ChEBI" id="CHEBI:15378"/>
        <dbReference type="ChEBI" id="CHEBI:17499"/>
        <dbReference type="ChEBI" id="CHEBI:29950"/>
        <dbReference type="ChEBI" id="CHEBI:30616"/>
        <dbReference type="ChEBI" id="CHEBI:33019"/>
        <dbReference type="ChEBI" id="CHEBI:61963"/>
        <dbReference type="ChEBI" id="CHEBI:65315"/>
        <dbReference type="ChEBI" id="CHEBI:87170"/>
        <dbReference type="ChEBI" id="CHEBI:456215"/>
        <dbReference type="EC" id="2.8.1.13"/>
    </reaction>
</comment>
<comment type="subcellular location">
    <subcellularLocation>
        <location evidence="1">Cytoplasm</location>
    </subcellularLocation>
</comment>
<comment type="similarity">
    <text evidence="1">Belongs to the MnmA/TRMU family.</text>
</comment>
<feature type="chain" id="PRO_0000121695" description="tRNA-specific 2-thiouridylase MnmA 2">
    <location>
        <begin position="1"/>
        <end position="364"/>
    </location>
</feature>
<feature type="region of interest" description="Interaction with tRNA" evidence="1">
    <location>
        <begin position="154"/>
        <end position="156"/>
    </location>
</feature>
<feature type="region of interest" description="Interaction with tRNA" evidence="1">
    <location>
        <begin position="310"/>
        <end position="311"/>
    </location>
</feature>
<feature type="active site" description="Nucleophile" evidence="1">
    <location>
        <position position="106"/>
    </location>
</feature>
<feature type="active site" description="Cysteine persulfide intermediate" evidence="1">
    <location>
        <position position="204"/>
    </location>
</feature>
<feature type="binding site" evidence="1">
    <location>
        <begin position="10"/>
        <end position="17"/>
    </location>
    <ligand>
        <name>ATP</name>
        <dbReference type="ChEBI" id="CHEBI:30616"/>
    </ligand>
</feature>
<feature type="binding site" evidence="1">
    <location>
        <position position="36"/>
    </location>
    <ligand>
        <name>ATP</name>
        <dbReference type="ChEBI" id="CHEBI:30616"/>
    </ligand>
</feature>
<feature type="binding site" evidence="1">
    <location>
        <position position="130"/>
    </location>
    <ligand>
        <name>ATP</name>
        <dbReference type="ChEBI" id="CHEBI:30616"/>
    </ligand>
</feature>
<feature type="site" description="Interaction with tRNA" evidence="1">
    <location>
        <position position="131"/>
    </location>
</feature>
<feature type="site" description="Interaction with tRNA" evidence="1">
    <location>
        <position position="343"/>
    </location>
</feature>
<feature type="disulfide bond" description="Alternate" evidence="1">
    <location>
        <begin position="106"/>
        <end position="204"/>
    </location>
</feature>
<accession>Q8R7F0</accession>
<protein>
    <recommendedName>
        <fullName evidence="1">tRNA-specific 2-thiouridylase MnmA 2</fullName>
        <ecNumber evidence="1">2.8.1.13</ecNumber>
    </recommendedName>
</protein>
<sequence length="364" mass="41567">MQKNNRVVVGMSGGVDSSVAAYLLKEQGYEVIGVTMQIWQDKDEEAVRVEGGCCSLAAVNDARRVANKIGIKYYVMNFKDVFKEKVIDYFVDEYLRGRTPNPCIACNKYIKFEELLKRAWMIDAYYVATGHYAIKEYDEERGRYLLKKSVDTSKDQTYVLYNLTQTQLEHILFPLGKYKKDKVRELAKNLGLPVASKPDSQEICFVTDNDYGKFIRENAKEEIKPGEFRDTRGRFLGYHKGIIHYTIGQRKGLGISVGKPLYVVDIDAENNVVVLGYGDEVYGDELISYNNNFISIDKLEKEMRVKAKIRYTAKEQDAVIRPLEDGRVFVKFDNPQRAITPGQSVVFYDGDIVVGGGIIERKVR</sequence>
<proteinExistence type="inferred from homology"/>